<dbReference type="EMBL" id="BC031521">
    <property type="protein sequence ID" value="AAH31521.1"/>
    <property type="molecule type" value="mRNA"/>
</dbReference>
<dbReference type="EMBL" id="AK003611">
    <property type="protein sequence ID" value="BAB22889.1"/>
    <property type="molecule type" value="mRNA"/>
</dbReference>
<dbReference type="CCDS" id="CCDS21140.1"/>
<dbReference type="RefSeq" id="NP_080224.1">
    <property type="nucleotide sequence ID" value="NM_025948.3"/>
</dbReference>
<dbReference type="SMR" id="Q8K2F8"/>
<dbReference type="BioGRID" id="211917">
    <property type="interactions" value="32"/>
</dbReference>
<dbReference type="FunCoup" id="Q8K2F8">
    <property type="interactions" value="4293"/>
</dbReference>
<dbReference type="IntAct" id="Q8K2F8">
    <property type="interactions" value="8"/>
</dbReference>
<dbReference type="MINT" id="Q8K2F8"/>
<dbReference type="STRING" id="10090.ENSMUSP00000082723"/>
<dbReference type="GlyGen" id="Q8K2F8">
    <property type="glycosylation" value="2 sites, 1 N-linked glycan (1 site), 1 O-linked glycan (1 site)"/>
</dbReference>
<dbReference type="iPTMnet" id="Q8K2F8"/>
<dbReference type="PhosphoSitePlus" id="Q8K2F8"/>
<dbReference type="SwissPalm" id="Q8K2F8"/>
<dbReference type="jPOST" id="Q8K2F8"/>
<dbReference type="PaxDb" id="10090-ENSMUSP00000082723"/>
<dbReference type="PeptideAtlas" id="Q8K2F8"/>
<dbReference type="ProteomicsDB" id="252533"/>
<dbReference type="Pumba" id="Q8K2F8"/>
<dbReference type="Antibodypedia" id="47950">
    <property type="antibodies" value="165 antibodies from 29 providers"/>
</dbReference>
<dbReference type="DNASU" id="67070"/>
<dbReference type="Ensembl" id="ENSMUST00000085585.12">
    <property type="protein sequence ID" value="ENSMUSP00000082723.6"/>
    <property type="gene ID" value="ENSMUSG00000066568.13"/>
</dbReference>
<dbReference type="GeneID" id="67070"/>
<dbReference type="KEGG" id="mmu:67070"/>
<dbReference type="UCSC" id="uc009gjd.1">
    <property type="organism name" value="mouse"/>
</dbReference>
<dbReference type="AGR" id="MGI:1914320"/>
<dbReference type="CTD" id="26065"/>
<dbReference type="MGI" id="MGI:1914320">
    <property type="gene designation" value="Lsm14a"/>
</dbReference>
<dbReference type="VEuPathDB" id="HostDB:ENSMUSG00000066568"/>
<dbReference type="eggNOG" id="KOG1073">
    <property type="taxonomic scope" value="Eukaryota"/>
</dbReference>
<dbReference type="GeneTree" id="ENSGT00940000154415"/>
<dbReference type="HOGENOM" id="CLU_019221_0_1_1"/>
<dbReference type="InParanoid" id="Q8K2F8"/>
<dbReference type="OMA" id="WYPPPGH"/>
<dbReference type="OrthoDB" id="21539at2759"/>
<dbReference type="PhylomeDB" id="Q8K2F8"/>
<dbReference type="TreeFam" id="TF313514"/>
<dbReference type="BioGRID-ORCS" id="67070">
    <property type="hits" value="3 hits in 78 CRISPR screens"/>
</dbReference>
<dbReference type="ChiTaRS" id="Lsm14a">
    <property type="organism name" value="mouse"/>
</dbReference>
<dbReference type="PRO" id="PR:Q8K2F8"/>
<dbReference type="Proteomes" id="UP000000589">
    <property type="component" value="Chromosome 7"/>
</dbReference>
<dbReference type="RNAct" id="Q8K2F8">
    <property type="molecule type" value="protein"/>
</dbReference>
<dbReference type="Bgee" id="ENSMUSG00000066568">
    <property type="expression patterns" value="Expressed in otolith organ and 232 other cell types or tissues"/>
</dbReference>
<dbReference type="ExpressionAtlas" id="Q8K2F8">
    <property type="expression patterns" value="baseline and differential"/>
</dbReference>
<dbReference type="GO" id="GO:0005737">
    <property type="term" value="C:cytoplasm"/>
    <property type="evidence" value="ECO:0000314"/>
    <property type="project" value="MGI"/>
</dbReference>
<dbReference type="GO" id="GO:0010494">
    <property type="term" value="C:cytoplasmic stress granule"/>
    <property type="evidence" value="ECO:0000250"/>
    <property type="project" value="UniProtKB"/>
</dbReference>
<dbReference type="GO" id="GO:0005829">
    <property type="term" value="C:cytosol"/>
    <property type="evidence" value="ECO:0007669"/>
    <property type="project" value="Ensembl"/>
</dbReference>
<dbReference type="GO" id="GO:0072686">
    <property type="term" value="C:mitotic spindle"/>
    <property type="evidence" value="ECO:0000250"/>
    <property type="project" value="UniProtKB"/>
</dbReference>
<dbReference type="GO" id="GO:0000932">
    <property type="term" value="C:P-body"/>
    <property type="evidence" value="ECO:0000314"/>
    <property type="project" value="MGI"/>
</dbReference>
<dbReference type="GO" id="GO:1990904">
    <property type="term" value="C:ribonucleoprotein complex"/>
    <property type="evidence" value="ECO:0007669"/>
    <property type="project" value="UniProtKB-KW"/>
</dbReference>
<dbReference type="GO" id="GO:0003690">
    <property type="term" value="F:double-stranded DNA binding"/>
    <property type="evidence" value="ECO:0000314"/>
    <property type="project" value="MGI"/>
</dbReference>
<dbReference type="GO" id="GO:0003725">
    <property type="term" value="F:double-stranded RNA binding"/>
    <property type="evidence" value="ECO:0000314"/>
    <property type="project" value="MGI"/>
</dbReference>
<dbReference type="GO" id="GO:0003727">
    <property type="term" value="F:single-stranded RNA binding"/>
    <property type="evidence" value="ECO:0000314"/>
    <property type="project" value="MGI"/>
</dbReference>
<dbReference type="GO" id="GO:0051607">
    <property type="term" value="P:defense response to virus"/>
    <property type="evidence" value="ECO:0000315"/>
    <property type="project" value="MGI"/>
</dbReference>
<dbReference type="GO" id="GO:0090307">
    <property type="term" value="P:mitotic spindle assembly"/>
    <property type="evidence" value="ECO:0000250"/>
    <property type="project" value="UniProtKB"/>
</dbReference>
<dbReference type="GO" id="GO:0017148">
    <property type="term" value="P:negative regulation of translation"/>
    <property type="evidence" value="ECO:0000250"/>
    <property type="project" value="UniProtKB"/>
</dbReference>
<dbReference type="GO" id="GO:0033962">
    <property type="term" value="P:P-body assembly"/>
    <property type="evidence" value="ECO:0000250"/>
    <property type="project" value="UniProtKB"/>
</dbReference>
<dbReference type="GO" id="GO:0060340">
    <property type="term" value="P:positive regulation of type I interferon-mediated signaling pathway"/>
    <property type="evidence" value="ECO:0000314"/>
    <property type="project" value="MGI"/>
</dbReference>
<dbReference type="GO" id="GO:0039529">
    <property type="term" value="P:RIG-I signaling pathway"/>
    <property type="evidence" value="ECO:0000316"/>
    <property type="project" value="MGI"/>
</dbReference>
<dbReference type="CDD" id="cd01736">
    <property type="entry name" value="LSm14_N"/>
    <property type="match status" value="1"/>
</dbReference>
<dbReference type="FunFam" id="2.30.30.100:FF:000006">
    <property type="entry name" value="Protein LSM14 homolog A isoform b"/>
    <property type="match status" value="1"/>
</dbReference>
<dbReference type="Gene3D" id="2.30.30.100">
    <property type="match status" value="1"/>
</dbReference>
<dbReference type="InterPro" id="IPR025762">
    <property type="entry name" value="DFDF"/>
</dbReference>
<dbReference type="InterPro" id="IPR019050">
    <property type="entry name" value="FDF_dom"/>
</dbReference>
<dbReference type="InterPro" id="IPR025761">
    <property type="entry name" value="FFD_box"/>
</dbReference>
<dbReference type="InterPro" id="IPR025609">
    <property type="entry name" value="Lsm14-like_N"/>
</dbReference>
<dbReference type="InterPro" id="IPR010920">
    <property type="entry name" value="LSM_dom_sf"/>
</dbReference>
<dbReference type="InterPro" id="IPR047575">
    <property type="entry name" value="Sm"/>
</dbReference>
<dbReference type="InterPro" id="IPR025768">
    <property type="entry name" value="TFG_box"/>
</dbReference>
<dbReference type="PANTHER" id="PTHR13586:SF2">
    <property type="entry name" value="PROTEIN LSM14 HOMOLOG A"/>
    <property type="match status" value="1"/>
</dbReference>
<dbReference type="PANTHER" id="PTHR13586">
    <property type="entry name" value="SCD6 PROTEIN-RELATED"/>
    <property type="match status" value="1"/>
</dbReference>
<dbReference type="Pfam" id="PF09532">
    <property type="entry name" value="FDF"/>
    <property type="match status" value="1"/>
</dbReference>
<dbReference type="Pfam" id="PF12701">
    <property type="entry name" value="LSM14"/>
    <property type="match status" value="1"/>
</dbReference>
<dbReference type="SMART" id="SM01199">
    <property type="entry name" value="FDF"/>
    <property type="match status" value="1"/>
</dbReference>
<dbReference type="SMART" id="SM01271">
    <property type="entry name" value="LSM14"/>
    <property type="match status" value="1"/>
</dbReference>
<dbReference type="SUPFAM" id="SSF50182">
    <property type="entry name" value="Sm-like ribonucleoproteins"/>
    <property type="match status" value="1"/>
</dbReference>
<dbReference type="PROSITE" id="PS51512">
    <property type="entry name" value="DFDF"/>
    <property type="match status" value="1"/>
</dbReference>
<dbReference type="PROSITE" id="PS51513">
    <property type="entry name" value="FFD"/>
    <property type="match status" value="1"/>
</dbReference>
<dbReference type="PROSITE" id="PS52002">
    <property type="entry name" value="SM"/>
    <property type="match status" value="1"/>
</dbReference>
<dbReference type="PROSITE" id="PS51536">
    <property type="entry name" value="TFG"/>
    <property type="match status" value="1"/>
</dbReference>
<comment type="function">
    <text evidence="2">Essential for formation of P-bodies, cytoplasmic structures that provide storage sites for translationally inactive mRNAs and protect them from degradation. Acts as a repressor of mRNA translation. May play a role in mitotic spindle assembly.</text>
</comment>
<comment type="subunit">
    <text evidence="1 2">Component of a ribonucleoprotein (RNP) complex (By similarity). Interacts with DDX6. Interacts with EIF4ENIF1/4E-T; promoting EIF4ENIF1/4E-T localization to P-bodies. Interacts (via FFD box) with EDC4 (By similarity).</text>
</comment>
<comment type="subcellular location">
    <subcellularLocation>
        <location evidence="2">Cytoplasm</location>
        <location evidence="2">P-body</location>
    </subcellularLocation>
    <subcellularLocation>
        <location evidence="2">Cytoplasm</location>
        <location evidence="2">Cytoskeleton</location>
        <location evidence="2">Spindle</location>
    </subcellularLocation>
    <subcellularLocation>
        <location evidence="2">Cytoplasm</location>
        <location evidence="2">Stress granule</location>
    </subcellularLocation>
</comment>
<comment type="domain">
    <text evidence="2">The LSM14 domain and the RGG repeats are required for accumulation in P-bodies, and the region containing the FDF motif is responsible for cytoplasmic retention.</text>
</comment>
<comment type="similarity">
    <text evidence="6">Belongs to the LSM14 family.</text>
</comment>
<evidence type="ECO:0000250" key="1">
    <source>
        <dbReference type="UniProtKB" id="A0A8M2"/>
    </source>
</evidence>
<evidence type="ECO:0000250" key="2">
    <source>
        <dbReference type="UniProtKB" id="Q8ND56"/>
    </source>
</evidence>
<evidence type="ECO:0000255" key="3">
    <source>
        <dbReference type="PROSITE-ProRule" id="PRU00845"/>
    </source>
</evidence>
<evidence type="ECO:0000255" key="4">
    <source>
        <dbReference type="PROSITE-ProRule" id="PRU01346"/>
    </source>
</evidence>
<evidence type="ECO:0000256" key="5">
    <source>
        <dbReference type="SAM" id="MobiDB-lite"/>
    </source>
</evidence>
<evidence type="ECO:0000305" key="6"/>
<evidence type="ECO:0007744" key="7">
    <source>
    </source>
</evidence>
<evidence type="ECO:0007744" key="8">
    <source>
    </source>
</evidence>
<evidence type="ECO:0007744" key="9">
    <source>
    </source>
</evidence>
<keyword id="KW-0007">Acetylation</keyword>
<keyword id="KW-0963">Cytoplasm</keyword>
<keyword id="KW-0206">Cytoskeleton</keyword>
<keyword id="KW-0217">Developmental protein</keyword>
<keyword id="KW-0488">Methylation</keyword>
<keyword id="KW-0597">Phosphoprotein</keyword>
<keyword id="KW-1185">Reference proteome</keyword>
<keyword id="KW-0678">Repressor</keyword>
<keyword id="KW-0687">Ribonucleoprotein</keyword>
<keyword id="KW-0810">Translation regulation</keyword>
<proteinExistence type="evidence at protein level"/>
<feature type="initiator methionine" description="Removed" evidence="2">
    <location>
        <position position="1"/>
    </location>
</feature>
<feature type="chain" id="PRO_0000187091" description="Protein LSM14 homolog A">
    <location>
        <begin position="2"/>
        <end position="462"/>
    </location>
</feature>
<feature type="domain" description="Sm" evidence="4">
    <location>
        <begin position="1"/>
        <end position="81"/>
    </location>
</feature>
<feature type="domain" description="DFDF" evidence="3">
    <location>
        <begin position="283"/>
        <end position="319"/>
    </location>
</feature>
<feature type="region of interest" description="Disordered" evidence="5">
    <location>
        <begin position="149"/>
        <end position="287"/>
    </location>
</feature>
<feature type="region of interest" description="Disordered" evidence="5">
    <location>
        <begin position="321"/>
        <end position="358"/>
    </location>
</feature>
<feature type="region of interest" description="Disordered" evidence="5">
    <location>
        <begin position="397"/>
        <end position="439"/>
    </location>
</feature>
<feature type="short sequence motif" description="FFD box">
    <location>
        <begin position="360"/>
        <end position="376"/>
    </location>
</feature>
<feature type="short sequence motif" description="TFG box">
    <location>
        <begin position="379"/>
        <end position="399"/>
    </location>
</feature>
<feature type="compositionally biased region" description="Polar residues" evidence="5">
    <location>
        <begin position="149"/>
        <end position="170"/>
    </location>
</feature>
<feature type="compositionally biased region" description="Polar residues" evidence="5">
    <location>
        <begin position="194"/>
        <end position="203"/>
    </location>
</feature>
<feature type="compositionally biased region" description="Basic and acidic residues" evidence="5">
    <location>
        <begin position="232"/>
        <end position="258"/>
    </location>
</feature>
<feature type="compositionally biased region" description="Basic residues" evidence="5">
    <location>
        <begin position="268"/>
        <end position="282"/>
    </location>
</feature>
<feature type="compositionally biased region" description="Basic and acidic residues" evidence="5">
    <location>
        <begin position="321"/>
        <end position="339"/>
    </location>
</feature>
<feature type="compositionally biased region" description="Gly residues" evidence="5">
    <location>
        <begin position="409"/>
        <end position="428"/>
    </location>
</feature>
<feature type="modified residue" description="N-acetylserine" evidence="2">
    <location>
        <position position="2"/>
    </location>
</feature>
<feature type="modified residue" description="Phosphoserine" evidence="2">
    <location>
        <position position="182"/>
    </location>
</feature>
<feature type="modified residue" description="Phosphoserine" evidence="8">
    <location>
        <position position="183"/>
    </location>
</feature>
<feature type="modified residue" description="Phosphoserine" evidence="8">
    <location>
        <position position="192"/>
    </location>
</feature>
<feature type="modified residue" description="Phosphothreonine" evidence="2">
    <location>
        <position position="194"/>
    </location>
</feature>
<feature type="modified residue" description="Phosphoserine" evidence="7">
    <location>
        <position position="216"/>
    </location>
</feature>
<feature type="modified residue" description="Phosphoserine" evidence="2">
    <location>
        <position position="227"/>
    </location>
</feature>
<feature type="modified residue" description="Asymmetric dimethylarginine" evidence="9">
    <location>
        <position position="400"/>
    </location>
</feature>
<accession>Q8K2F8</accession>
<accession>Q9CTG8</accession>
<organism>
    <name type="scientific">Mus musculus</name>
    <name type="common">Mouse</name>
    <dbReference type="NCBI Taxonomy" id="10090"/>
    <lineage>
        <taxon>Eukaryota</taxon>
        <taxon>Metazoa</taxon>
        <taxon>Chordata</taxon>
        <taxon>Craniata</taxon>
        <taxon>Vertebrata</taxon>
        <taxon>Euteleostomi</taxon>
        <taxon>Mammalia</taxon>
        <taxon>Eutheria</taxon>
        <taxon>Euarchontoglires</taxon>
        <taxon>Glires</taxon>
        <taxon>Rodentia</taxon>
        <taxon>Myomorpha</taxon>
        <taxon>Muroidea</taxon>
        <taxon>Muridae</taxon>
        <taxon>Murinae</taxon>
        <taxon>Mus</taxon>
        <taxon>Mus</taxon>
    </lineage>
</organism>
<protein>
    <recommendedName>
        <fullName>Protein LSM14 homolog A</fullName>
    </recommendedName>
    <alternativeName>
        <fullName>Protein FAM61A</fullName>
    </alternativeName>
    <alternativeName>
        <fullName>RNA-associated protein 55A</fullName>
        <shortName>mRAP55A</shortName>
    </alternativeName>
</protein>
<reference key="1">
    <citation type="journal article" date="2004" name="Genome Res.">
        <title>The status, quality, and expansion of the NIH full-length cDNA project: the Mammalian Gene Collection (MGC).</title>
        <authorList>
            <consortium name="The MGC Project Team"/>
        </authorList>
    </citation>
    <scope>NUCLEOTIDE SEQUENCE [LARGE SCALE MRNA]</scope>
    <source>
        <strain>FVB/N-3</strain>
        <tissue>Mammary tumor</tissue>
    </source>
</reference>
<reference key="2">
    <citation type="journal article" date="2005" name="Science">
        <title>The transcriptional landscape of the mammalian genome.</title>
        <authorList>
            <person name="Carninci P."/>
            <person name="Kasukawa T."/>
            <person name="Katayama S."/>
            <person name="Gough J."/>
            <person name="Frith M.C."/>
            <person name="Maeda N."/>
            <person name="Oyama R."/>
            <person name="Ravasi T."/>
            <person name="Lenhard B."/>
            <person name="Wells C."/>
            <person name="Kodzius R."/>
            <person name="Shimokawa K."/>
            <person name="Bajic V.B."/>
            <person name="Brenner S.E."/>
            <person name="Batalov S."/>
            <person name="Forrest A.R."/>
            <person name="Zavolan M."/>
            <person name="Davis M.J."/>
            <person name="Wilming L.G."/>
            <person name="Aidinis V."/>
            <person name="Allen J.E."/>
            <person name="Ambesi-Impiombato A."/>
            <person name="Apweiler R."/>
            <person name="Aturaliya R.N."/>
            <person name="Bailey T.L."/>
            <person name="Bansal M."/>
            <person name="Baxter L."/>
            <person name="Beisel K.W."/>
            <person name="Bersano T."/>
            <person name="Bono H."/>
            <person name="Chalk A.M."/>
            <person name="Chiu K.P."/>
            <person name="Choudhary V."/>
            <person name="Christoffels A."/>
            <person name="Clutterbuck D.R."/>
            <person name="Crowe M.L."/>
            <person name="Dalla E."/>
            <person name="Dalrymple B.P."/>
            <person name="de Bono B."/>
            <person name="Della Gatta G."/>
            <person name="di Bernardo D."/>
            <person name="Down T."/>
            <person name="Engstrom P."/>
            <person name="Fagiolini M."/>
            <person name="Faulkner G."/>
            <person name="Fletcher C.F."/>
            <person name="Fukushima T."/>
            <person name="Furuno M."/>
            <person name="Futaki S."/>
            <person name="Gariboldi M."/>
            <person name="Georgii-Hemming P."/>
            <person name="Gingeras T.R."/>
            <person name="Gojobori T."/>
            <person name="Green R.E."/>
            <person name="Gustincich S."/>
            <person name="Harbers M."/>
            <person name="Hayashi Y."/>
            <person name="Hensch T.K."/>
            <person name="Hirokawa N."/>
            <person name="Hill D."/>
            <person name="Huminiecki L."/>
            <person name="Iacono M."/>
            <person name="Ikeo K."/>
            <person name="Iwama A."/>
            <person name="Ishikawa T."/>
            <person name="Jakt M."/>
            <person name="Kanapin A."/>
            <person name="Katoh M."/>
            <person name="Kawasawa Y."/>
            <person name="Kelso J."/>
            <person name="Kitamura H."/>
            <person name="Kitano H."/>
            <person name="Kollias G."/>
            <person name="Krishnan S.P."/>
            <person name="Kruger A."/>
            <person name="Kummerfeld S.K."/>
            <person name="Kurochkin I.V."/>
            <person name="Lareau L.F."/>
            <person name="Lazarevic D."/>
            <person name="Lipovich L."/>
            <person name="Liu J."/>
            <person name="Liuni S."/>
            <person name="McWilliam S."/>
            <person name="Madan Babu M."/>
            <person name="Madera M."/>
            <person name="Marchionni L."/>
            <person name="Matsuda H."/>
            <person name="Matsuzawa S."/>
            <person name="Miki H."/>
            <person name="Mignone F."/>
            <person name="Miyake S."/>
            <person name="Morris K."/>
            <person name="Mottagui-Tabar S."/>
            <person name="Mulder N."/>
            <person name="Nakano N."/>
            <person name="Nakauchi H."/>
            <person name="Ng P."/>
            <person name="Nilsson R."/>
            <person name="Nishiguchi S."/>
            <person name="Nishikawa S."/>
            <person name="Nori F."/>
            <person name="Ohara O."/>
            <person name="Okazaki Y."/>
            <person name="Orlando V."/>
            <person name="Pang K.C."/>
            <person name="Pavan W.J."/>
            <person name="Pavesi G."/>
            <person name="Pesole G."/>
            <person name="Petrovsky N."/>
            <person name="Piazza S."/>
            <person name="Reed J."/>
            <person name="Reid J.F."/>
            <person name="Ring B.Z."/>
            <person name="Ringwald M."/>
            <person name="Rost B."/>
            <person name="Ruan Y."/>
            <person name="Salzberg S.L."/>
            <person name="Sandelin A."/>
            <person name="Schneider C."/>
            <person name="Schoenbach C."/>
            <person name="Sekiguchi K."/>
            <person name="Semple C.A."/>
            <person name="Seno S."/>
            <person name="Sessa L."/>
            <person name="Sheng Y."/>
            <person name="Shibata Y."/>
            <person name="Shimada H."/>
            <person name="Shimada K."/>
            <person name="Silva D."/>
            <person name="Sinclair B."/>
            <person name="Sperling S."/>
            <person name="Stupka E."/>
            <person name="Sugiura K."/>
            <person name="Sultana R."/>
            <person name="Takenaka Y."/>
            <person name="Taki K."/>
            <person name="Tammoja K."/>
            <person name="Tan S.L."/>
            <person name="Tang S."/>
            <person name="Taylor M.S."/>
            <person name="Tegner J."/>
            <person name="Teichmann S.A."/>
            <person name="Ueda H.R."/>
            <person name="van Nimwegen E."/>
            <person name="Verardo R."/>
            <person name="Wei C.L."/>
            <person name="Yagi K."/>
            <person name="Yamanishi H."/>
            <person name="Zabarovsky E."/>
            <person name="Zhu S."/>
            <person name="Zimmer A."/>
            <person name="Hide W."/>
            <person name="Bult C."/>
            <person name="Grimmond S.M."/>
            <person name="Teasdale R.D."/>
            <person name="Liu E.T."/>
            <person name="Brusic V."/>
            <person name="Quackenbush J."/>
            <person name="Wahlestedt C."/>
            <person name="Mattick J.S."/>
            <person name="Hume D.A."/>
            <person name="Kai C."/>
            <person name="Sasaki D."/>
            <person name="Tomaru Y."/>
            <person name="Fukuda S."/>
            <person name="Kanamori-Katayama M."/>
            <person name="Suzuki M."/>
            <person name="Aoki J."/>
            <person name="Arakawa T."/>
            <person name="Iida J."/>
            <person name="Imamura K."/>
            <person name="Itoh M."/>
            <person name="Kato T."/>
            <person name="Kawaji H."/>
            <person name="Kawagashira N."/>
            <person name="Kawashima T."/>
            <person name="Kojima M."/>
            <person name="Kondo S."/>
            <person name="Konno H."/>
            <person name="Nakano K."/>
            <person name="Ninomiya N."/>
            <person name="Nishio T."/>
            <person name="Okada M."/>
            <person name="Plessy C."/>
            <person name="Shibata K."/>
            <person name="Shiraki T."/>
            <person name="Suzuki S."/>
            <person name="Tagami M."/>
            <person name="Waki K."/>
            <person name="Watahiki A."/>
            <person name="Okamura-Oho Y."/>
            <person name="Suzuki H."/>
            <person name="Kawai J."/>
            <person name="Hayashizaki Y."/>
        </authorList>
    </citation>
    <scope>NUCLEOTIDE SEQUENCE [LARGE SCALE MRNA] OF 127-462</scope>
    <source>
        <strain>C57BL/6J</strain>
        <tissue>Embryo</tissue>
    </source>
</reference>
<reference key="3">
    <citation type="journal article" date="2007" name="Proc. Natl. Acad. Sci. U.S.A.">
        <title>Large-scale phosphorylation analysis of mouse liver.</title>
        <authorList>
            <person name="Villen J."/>
            <person name="Beausoleil S.A."/>
            <person name="Gerber S.A."/>
            <person name="Gygi S.P."/>
        </authorList>
    </citation>
    <scope>IDENTIFICATION BY MASS SPECTROMETRY [LARGE SCALE ANALYSIS]</scope>
    <source>
        <tissue>Liver</tissue>
    </source>
</reference>
<reference key="4">
    <citation type="journal article" date="2009" name="Immunity">
        <title>The phagosomal proteome in interferon-gamma-activated macrophages.</title>
        <authorList>
            <person name="Trost M."/>
            <person name="English L."/>
            <person name="Lemieux S."/>
            <person name="Courcelles M."/>
            <person name="Desjardins M."/>
            <person name="Thibault P."/>
        </authorList>
    </citation>
    <scope>IDENTIFICATION BY MASS SPECTROMETRY [LARGE SCALE ANALYSIS]</scope>
</reference>
<reference key="5">
    <citation type="journal article" date="2009" name="Int. J. Biochem. Cell Biol.">
        <title>RAP55: insights into an evolutionarily conserved protein family.</title>
        <authorList>
            <person name="Marnef A."/>
            <person name="Sommerville J."/>
            <person name="Ladomery M.R."/>
        </authorList>
    </citation>
    <scope>REVIEW</scope>
</reference>
<reference key="6">
    <citation type="journal article" date="2009" name="Mol. Cell. Proteomics">
        <title>Large scale localization of protein phosphorylation by use of electron capture dissociation mass spectrometry.</title>
        <authorList>
            <person name="Sweet S.M."/>
            <person name="Bailey C.M."/>
            <person name="Cunningham D.L."/>
            <person name="Heath J.K."/>
            <person name="Cooper H.J."/>
        </authorList>
    </citation>
    <scope>PHOSPHORYLATION [LARGE SCALE ANALYSIS] AT SER-216</scope>
    <scope>IDENTIFICATION BY MASS SPECTROMETRY [LARGE SCALE ANALYSIS]</scope>
    <source>
        <tissue>Embryonic fibroblast</tissue>
    </source>
</reference>
<reference key="7">
    <citation type="journal article" date="2010" name="Cell">
        <title>A tissue-specific atlas of mouse protein phosphorylation and expression.</title>
        <authorList>
            <person name="Huttlin E.L."/>
            <person name="Jedrychowski M.P."/>
            <person name="Elias J.E."/>
            <person name="Goswami T."/>
            <person name="Rad R."/>
            <person name="Beausoleil S.A."/>
            <person name="Villen J."/>
            <person name="Haas W."/>
            <person name="Sowa M.E."/>
            <person name="Gygi S.P."/>
        </authorList>
    </citation>
    <scope>PHOSPHORYLATION [LARGE SCALE ANALYSIS] AT SER-183 AND SER-192</scope>
    <scope>IDENTIFICATION BY MASS SPECTROMETRY [LARGE SCALE ANALYSIS]</scope>
    <source>
        <tissue>Brain</tissue>
        <tissue>Brown adipose tissue</tissue>
        <tissue>Heart</tissue>
        <tissue>Kidney</tissue>
        <tissue>Liver</tissue>
        <tissue>Lung</tissue>
        <tissue>Spleen</tissue>
        <tissue>Testis</tissue>
    </source>
</reference>
<reference key="8">
    <citation type="journal article" date="2014" name="Mol. Cell. Proteomics">
        <title>Immunoaffinity enrichment and mass spectrometry analysis of protein methylation.</title>
        <authorList>
            <person name="Guo A."/>
            <person name="Gu H."/>
            <person name="Zhou J."/>
            <person name="Mulhern D."/>
            <person name="Wang Y."/>
            <person name="Lee K.A."/>
            <person name="Yang V."/>
            <person name="Aguiar M."/>
            <person name="Kornhauser J."/>
            <person name="Jia X."/>
            <person name="Ren J."/>
            <person name="Beausoleil S.A."/>
            <person name="Silva J.C."/>
            <person name="Vemulapalli V."/>
            <person name="Bedford M.T."/>
            <person name="Comb M.J."/>
        </authorList>
    </citation>
    <scope>METHYLATION [LARGE SCALE ANALYSIS] AT ARG-400</scope>
    <scope>IDENTIFICATION BY MASS SPECTROMETRY [LARGE SCALE ANALYSIS]</scope>
    <source>
        <tissue>Embryo</tissue>
    </source>
</reference>
<sequence length="462" mass="50546">MSGGTPYIGSKISLISKAEIRYEGILYTIDTENSTVALAKVRSFGTEDRPTDRPIPPRDEVFEYIIFRGSDIKDLTVCEPPKPQCSLPQDPAIVQSSLGSSSSSFQSVGSYGPFGRMPAYSQFSPSTLVGQQFGAVGVAGNSLTSFGTEASNSGTLSQSNAVGSAFTQDTRSVKPQLAQGRSSPQLDPLRKSPTMEQAVQTASAHLPAPAPVGRRSPVPARPLPPTSQKAIDNQEHRRAEVHKVPRPENEQLRNDKRQVVPGVPSAPRRGRGGHRGGRGRFGIRRDGPMKFEKDFDFESANAQFNKEEIDREFHNKLKLKEDKLEKQEKPVNGEDKGDSGVDTQNSEGNADEEDPLGPNCYYDKTKSFFDNISCDDNRERRPTWAEERRLNAETFGIPLRPNRGRGGYRGRGGLGFRGGRGRGSGRGGTFTAPRGFRAGFRGARGGREFADFEYRKTTAFGP</sequence>
<gene>
    <name type="primary">Lsm14a</name>
    <name type="synonym">Fam61a</name>
    <name type="synonym">Rap55a</name>
</gene>
<name>LS14A_MOUSE</name>